<comment type="function">
    <text evidence="1">Catalyzes the decarboxylation of four acetate groups of uroporphyrinogen-III to yield coproporphyrinogen-III.</text>
</comment>
<comment type="catalytic activity">
    <reaction evidence="1">
        <text>uroporphyrinogen III + 4 H(+) = coproporphyrinogen III + 4 CO2</text>
        <dbReference type="Rhea" id="RHEA:19865"/>
        <dbReference type="ChEBI" id="CHEBI:15378"/>
        <dbReference type="ChEBI" id="CHEBI:16526"/>
        <dbReference type="ChEBI" id="CHEBI:57308"/>
        <dbReference type="ChEBI" id="CHEBI:57309"/>
        <dbReference type="EC" id="4.1.1.37"/>
    </reaction>
</comment>
<comment type="pathway">
    <text evidence="1">Porphyrin-containing compound metabolism; protoporphyrin-IX biosynthesis; coproporphyrinogen-III from 5-aminolevulinate: step 4/4.</text>
</comment>
<comment type="subunit">
    <text evidence="1">Homodimer.</text>
</comment>
<comment type="subcellular location">
    <subcellularLocation>
        <location evidence="1">Cytoplasm</location>
    </subcellularLocation>
</comment>
<comment type="similarity">
    <text evidence="1">Belongs to the uroporphyrinogen decarboxylase family.</text>
</comment>
<proteinExistence type="inferred from homology"/>
<organism>
    <name type="scientific">Colwellia psychrerythraea (strain 34H / ATCC BAA-681)</name>
    <name type="common">Vibrio psychroerythus</name>
    <dbReference type="NCBI Taxonomy" id="167879"/>
    <lineage>
        <taxon>Bacteria</taxon>
        <taxon>Pseudomonadati</taxon>
        <taxon>Pseudomonadota</taxon>
        <taxon>Gammaproteobacteria</taxon>
        <taxon>Alteromonadales</taxon>
        <taxon>Colwelliaceae</taxon>
        <taxon>Colwellia</taxon>
    </lineage>
</organism>
<name>DCUP_COLP3</name>
<keyword id="KW-0963">Cytoplasm</keyword>
<keyword id="KW-0210">Decarboxylase</keyword>
<keyword id="KW-0456">Lyase</keyword>
<keyword id="KW-0627">Porphyrin biosynthesis</keyword>
<gene>
    <name evidence="1" type="primary">hemE</name>
    <name type="ordered locus">CPS_0448</name>
</gene>
<protein>
    <recommendedName>
        <fullName evidence="1">Uroporphyrinogen decarboxylase</fullName>
        <shortName evidence="1">UPD</shortName>
        <shortName evidence="1">URO-D</shortName>
        <ecNumber evidence="1">4.1.1.37</ecNumber>
    </recommendedName>
</protein>
<accession>Q489Q8</accession>
<evidence type="ECO:0000255" key="1">
    <source>
        <dbReference type="HAMAP-Rule" id="MF_00218"/>
    </source>
</evidence>
<reference key="1">
    <citation type="journal article" date="2005" name="Proc. Natl. Acad. Sci. U.S.A.">
        <title>The psychrophilic lifestyle as revealed by the genome sequence of Colwellia psychrerythraea 34H through genomic and proteomic analyses.</title>
        <authorList>
            <person name="Methe B.A."/>
            <person name="Nelson K.E."/>
            <person name="Deming J.W."/>
            <person name="Momen B."/>
            <person name="Melamud E."/>
            <person name="Zhang X."/>
            <person name="Moult J."/>
            <person name="Madupu R."/>
            <person name="Nelson W.C."/>
            <person name="Dodson R.J."/>
            <person name="Brinkac L.M."/>
            <person name="Daugherty S.C."/>
            <person name="Durkin A.S."/>
            <person name="DeBoy R.T."/>
            <person name="Kolonay J.F."/>
            <person name="Sullivan S.A."/>
            <person name="Zhou L."/>
            <person name="Davidsen T.M."/>
            <person name="Wu M."/>
            <person name="Huston A.L."/>
            <person name="Lewis M."/>
            <person name="Weaver B."/>
            <person name="Weidman J.F."/>
            <person name="Khouri H."/>
            <person name="Utterback T.R."/>
            <person name="Feldblyum T.V."/>
            <person name="Fraser C.M."/>
        </authorList>
    </citation>
    <scope>NUCLEOTIDE SEQUENCE [LARGE SCALE GENOMIC DNA]</scope>
    <source>
        <strain>34H / ATCC BAA-681</strain>
    </source>
</reference>
<dbReference type="EC" id="4.1.1.37" evidence="1"/>
<dbReference type="EMBL" id="CP000083">
    <property type="protein sequence ID" value="AAZ27556.1"/>
    <property type="molecule type" value="Genomic_DNA"/>
</dbReference>
<dbReference type="RefSeq" id="WP_011041309.1">
    <property type="nucleotide sequence ID" value="NC_003910.7"/>
</dbReference>
<dbReference type="SMR" id="Q489Q8"/>
<dbReference type="STRING" id="167879.CPS_0448"/>
<dbReference type="KEGG" id="cps:CPS_0448"/>
<dbReference type="eggNOG" id="COG0407">
    <property type="taxonomic scope" value="Bacteria"/>
</dbReference>
<dbReference type="HOGENOM" id="CLU_040933_0_0_6"/>
<dbReference type="UniPathway" id="UPA00251">
    <property type="reaction ID" value="UER00321"/>
</dbReference>
<dbReference type="Proteomes" id="UP000000547">
    <property type="component" value="Chromosome"/>
</dbReference>
<dbReference type="GO" id="GO:0005829">
    <property type="term" value="C:cytosol"/>
    <property type="evidence" value="ECO:0007669"/>
    <property type="project" value="TreeGrafter"/>
</dbReference>
<dbReference type="GO" id="GO:0004853">
    <property type="term" value="F:uroporphyrinogen decarboxylase activity"/>
    <property type="evidence" value="ECO:0007669"/>
    <property type="project" value="UniProtKB-UniRule"/>
</dbReference>
<dbReference type="GO" id="GO:0019353">
    <property type="term" value="P:protoporphyrinogen IX biosynthetic process from glutamate"/>
    <property type="evidence" value="ECO:0007669"/>
    <property type="project" value="TreeGrafter"/>
</dbReference>
<dbReference type="CDD" id="cd00717">
    <property type="entry name" value="URO-D"/>
    <property type="match status" value="1"/>
</dbReference>
<dbReference type="FunFam" id="3.20.20.210:FF:000001">
    <property type="entry name" value="Uroporphyrinogen decarboxylase"/>
    <property type="match status" value="1"/>
</dbReference>
<dbReference type="Gene3D" id="3.20.20.210">
    <property type="match status" value="1"/>
</dbReference>
<dbReference type="HAMAP" id="MF_00218">
    <property type="entry name" value="URO_D"/>
    <property type="match status" value="1"/>
</dbReference>
<dbReference type="InterPro" id="IPR038071">
    <property type="entry name" value="UROD/MetE-like_sf"/>
</dbReference>
<dbReference type="InterPro" id="IPR006361">
    <property type="entry name" value="Uroporphyrinogen_deCO2ase_HemE"/>
</dbReference>
<dbReference type="InterPro" id="IPR000257">
    <property type="entry name" value="Uroporphyrinogen_deCOase"/>
</dbReference>
<dbReference type="NCBIfam" id="TIGR01464">
    <property type="entry name" value="hemE"/>
    <property type="match status" value="1"/>
</dbReference>
<dbReference type="PANTHER" id="PTHR21091">
    <property type="entry name" value="METHYLTETRAHYDROFOLATE:HOMOCYSTEINE METHYLTRANSFERASE RELATED"/>
    <property type="match status" value="1"/>
</dbReference>
<dbReference type="PANTHER" id="PTHR21091:SF169">
    <property type="entry name" value="UROPORPHYRINOGEN DECARBOXYLASE"/>
    <property type="match status" value="1"/>
</dbReference>
<dbReference type="Pfam" id="PF01208">
    <property type="entry name" value="URO-D"/>
    <property type="match status" value="1"/>
</dbReference>
<dbReference type="SUPFAM" id="SSF51726">
    <property type="entry name" value="UROD/MetE-like"/>
    <property type="match status" value="1"/>
</dbReference>
<dbReference type="PROSITE" id="PS00906">
    <property type="entry name" value="UROD_1"/>
    <property type="match status" value="1"/>
</dbReference>
<dbReference type="PROSITE" id="PS00907">
    <property type="entry name" value="UROD_2"/>
    <property type="match status" value="1"/>
</dbReference>
<feature type="chain" id="PRO_1000023899" description="Uroporphyrinogen decarboxylase">
    <location>
        <begin position="1"/>
        <end position="355"/>
    </location>
</feature>
<feature type="binding site" evidence="1">
    <location>
        <begin position="27"/>
        <end position="31"/>
    </location>
    <ligand>
        <name>substrate</name>
    </ligand>
</feature>
<feature type="binding site" evidence="1">
    <location>
        <position position="77"/>
    </location>
    <ligand>
        <name>substrate</name>
    </ligand>
</feature>
<feature type="binding site" evidence="1">
    <location>
        <position position="154"/>
    </location>
    <ligand>
        <name>substrate</name>
    </ligand>
</feature>
<feature type="binding site" evidence="1">
    <location>
        <position position="209"/>
    </location>
    <ligand>
        <name>substrate</name>
    </ligand>
</feature>
<feature type="binding site" evidence="1">
    <location>
        <position position="328"/>
    </location>
    <ligand>
        <name>substrate</name>
    </ligand>
</feature>
<feature type="site" description="Transition state stabilizer" evidence="1">
    <location>
        <position position="77"/>
    </location>
</feature>
<sequence>MTELKNDTYLRALLKQPVDYTPVWMMRQAGRYLPEYREVRKNAGDFMSVCKNAELACEVTIQPLRRFPLDAAILFSDILTIPDAMGLGLYFETGEGPKFERPITCKADVDKIAVPDPEDELGYVMNAVRTIRKELKGEVPLIGFSGSPWTLATYMIEGGSSKAFTKIKKMMFAEPQTLHLLLDKLADSVISYLNAQIAAGAQSVMVFDTWGGVLSPRDYNEFSLQYMAKIVDGLTRHNEGRQVPVTLFTKNGGMWLESIAATGCDAVGLDWTIDIENAKARVGDKVALQGNMDPSMLYAPLPRIEQEVSKILSGFGEGGTGHVFNLGHGIHPDVNPDHAGHFIESVHRLSKPYHK</sequence>